<name>MURA2_CALS4</name>
<evidence type="ECO:0000255" key="1">
    <source>
        <dbReference type="HAMAP-Rule" id="MF_00111"/>
    </source>
</evidence>
<gene>
    <name evidence="1" type="primary">murA2</name>
    <name type="ordered locus">TTE1644</name>
</gene>
<keyword id="KW-0131">Cell cycle</keyword>
<keyword id="KW-0132">Cell division</keyword>
<keyword id="KW-0133">Cell shape</keyword>
<keyword id="KW-0961">Cell wall biogenesis/degradation</keyword>
<keyword id="KW-0963">Cytoplasm</keyword>
<keyword id="KW-0573">Peptidoglycan synthesis</keyword>
<keyword id="KW-0670">Pyruvate</keyword>
<keyword id="KW-1185">Reference proteome</keyword>
<keyword id="KW-0808">Transferase</keyword>
<organism>
    <name type="scientific">Caldanaerobacter subterraneus subsp. tengcongensis (strain DSM 15242 / JCM 11007 / NBRC 100824 / MB4)</name>
    <name type="common">Thermoanaerobacter tengcongensis</name>
    <dbReference type="NCBI Taxonomy" id="273068"/>
    <lineage>
        <taxon>Bacteria</taxon>
        <taxon>Bacillati</taxon>
        <taxon>Bacillota</taxon>
        <taxon>Clostridia</taxon>
        <taxon>Thermoanaerobacterales</taxon>
        <taxon>Thermoanaerobacteraceae</taxon>
        <taxon>Caldanaerobacter</taxon>
    </lineage>
</organism>
<sequence>MGKFKINGGKRLYGEVEVHGAKNSILPILAATILNEGVSVIHNCPRLKDVDSMIEILEHIGCKVSFSGRDIVVDARDVKDSEIPDNLMRTMRSSIFLMGALIARNKKAFISFPGGCDIGHRPIDLHLKGLKKLGVEIEESYGYIRCKGVRVRGNEIHLDLPSVGATENIMLAATLADGITVIRNAAKEPEIEDLQNFLNSMGARITGAGTNTIVIEGVKKLHDTEYTIIPDRIVAGTYLCAAAMTRGELTVVKALKEHLEPLISKLKETGCELKTGNDYIKITCNKRPKAVDMIVTLPYPGFPTDLQPQIVSVLSIAEGTSIVTETIFDNRFKYTEELVRMGADIKVEGRVAVIRGVDKITGAKVLAKDLRGGVALVIAGLGAEGTTVVEGAEHIDRGYESLEKALKSVGADIVRIM</sequence>
<reference key="1">
    <citation type="journal article" date="2002" name="Genome Res.">
        <title>A complete sequence of the T. tengcongensis genome.</title>
        <authorList>
            <person name="Bao Q."/>
            <person name="Tian Y."/>
            <person name="Li W."/>
            <person name="Xu Z."/>
            <person name="Xuan Z."/>
            <person name="Hu S."/>
            <person name="Dong W."/>
            <person name="Yang J."/>
            <person name="Chen Y."/>
            <person name="Xue Y."/>
            <person name="Xu Y."/>
            <person name="Lai X."/>
            <person name="Huang L."/>
            <person name="Dong X."/>
            <person name="Ma Y."/>
            <person name="Ling L."/>
            <person name="Tan H."/>
            <person name="Chen R."/>
            <person name="Wang J."/>
            <person name="Yu J."/>
            <person name="Yang H."/>
        </authorList>
    </citation>
    <scope>NUCLEOTIDE SEQUENCE [LARGE SCALE GENOMIC DNA]</scope>
    <source>
        <strain>DSM 15242 / JCM 11007 / NBRC 100824 / MB4</strain>
    </source>
</reference>
<comment type="function">
    <text evidence="1">Cell wall formation. Adds enolpyruvyl to UDP-N-acetylglucosamine.</text>
</comment>
<comment type="catalytic activity">
    <reaction evidence="1">
        <text>phosphoenolpyruvate + UDP-N-acetyl-alpha-D-glucosamine = UDP-N-acetyl-3-O-(1-carboxyvinyl)-alpha-D-glucosamine + phosphate</text>
        <dbReference type="Rhea" id="RHEA:18681"/>
        <dbReference type="ChEBI" id="CHEBI:43474"/>
        <dbReference type="ChEBI" id="CHEBI:57705"/>
        <dbReference type="ChEBI" id="CHEBI:58702"/>
        <dbReference type="ChEBI" id="CHEBI:68483"/>
        <dbReference type="EC" id="2.5.1.7"/>
    </reaction>
</comment>
<comment type="pathway">
    <text evidence="1">Cell wall biogenesis; peptidoglycan biosynthesis.</text>
</comment>
<comment type="subcellular location">
    <subcellularLocation>
        <location evidence="1">Cytoplasm</location>
    </subcellularLocation>
</comment>
<comment type="similarity">
    <text evidence="1">Belongs to the EPSP synthase family. MurA subfamily.</text>
</comment>
<dbReference type="EC" id="2.5.1.7" evidence="1"/>
<dbReference type="EMBL" id="AE008691">
    <property type="protein sequence ID" value="AAM24846.1"/>
    <property type="molecule type" value="Genomic_DNA"/>
</dbReference>
<dbReference type="SMR" id="Q8R9G7"/>
<dbReference type="STRING" id="273068.TTE1644"/>
<dbReference type="KEGG" id="tte:TTE1644"/>
<dbReference type="eggNOG" id="COG0766">
    <property type="taxonomic scope" value="Bacteria"/>
</dbReference>
<dbReference type="HOGENOM" id="CLU_027387_0_0_9"/>
<dbReference type="OrthoDB" id="9803760at2"/>
<dbReference type="UniPathway" id="UPA00219"/>
<dbReference type="Proteomes" id="UP000000555">
    <property type="component" value="Chromosome"/>
</dbReference>
<dbReference type="GO" id="GO:0005737">
    <property type="term" value="C:cytoplasm"/>
    <property type="evidence" value="ECO:0007669"/>
    <property type="project" value="UniProtKB-SubCell"/>
</dbReference>
<dbReference type="GO" id="GO:0008760">
    <property type="term" value="F:UDP-N-acetylglucosamine 1-carboxyvinyltransferase activity"/>
    <property type="evidence" value="ECO:0007669"/>
    <property type="project" value="UniProtKB-UniRule"/>
</dbReference>
<dbReference type="GO" id="GO:0051301">
    <property type="term" value="P:cell division"/>
    <property type="evidence" value="ECO:0007669"/>
    <property type="project" value="UniProtKB-KW"/>
</dbReference>
<dbReference type="GO" id="GO:0071555">
    <property type="term" value="P:cell wall organization"/>
    <property type="evidence" value="ECO:0007669"/>
    <property type="project" value="UniProtKB-KW"/>
</dbReference>
<dbReference type="GO" id="GO:0009252">
    <property type="term" value="P:peptidoglycan biosynthetic process"/>
    <property type="evidence" value="ECO:0007669"/>
    <property type="project" value="UniProtKB-UniRule"/>
</dbReference>
<dbReference type="GO" id="GO:0008360">
    <property type="term" value="P:regulation of cell shape"/>
    <property type="evidence" value="ECO:0007669"/>
    <property type="project" value="UniProtKB-KW"/>
</dbReference>
<dbReference type="GO" id="GO:0019277">
    <property type="term" value="P:UDP-N-acetylgalactosamine biosynthetic process"/>
    <property type="evidence" value="ECO:0007669"/>
    <property type="project" value="InterPro"/>
</dbReference>
<dbReference type="CDD" id="cd01555">
    <property type="entry name" value="UdpNAET"/>
    <property type="match status" value="1"/>
</dbReference>
<dbReference type="FunFam" id="3.65.10.10:FF:000001">
    <property type="entry name" value="UDP-N-acetylglucosamine 1-carboxyvinyltransferase"/>
    <property type="match status" value="1"/>
</dbReference>
<dbReference type="Gene3D" id="3.65.10.10">
    <property type="entry name" value="Enolpyruvate transferase domain"/>
    <property type="match status" value="2"/>
</dbReference>
<dbReference type="HAMAP" id="MF_00111">
    <property type="entry name" value="MurA"/>
    <property type="match status" value="1"/>
</dbReference>
<dbReference type="InterPro" id="IPR001986">
    <property type="entry name" value="Enolpyruvate_Tfrase_dom"/>
</dbReference>
<dbReference type="InterPro" id="IPR036968">
    <property type="entry name" value="Enolpyruvate_Tfrase_sf"/>
</dbReference>
<dbReference type="InterPro" id="IPR050068">
    <property type="entry name" value="MurA_subfamily"/>
</dbReference>
<dbReference type="InterPro" id="IPR013792">
    <property type="entry name" value="RNA3'P_cycl/enolpyr_Trfase_a/b"/>
</dbReference>
<dbReference type="InterPro" id="IPR005750">
    <property type="entry name" value="UDP_GlcNAc_COvinyl_MurA"/>
</dbReference>
<dbReference type="NCBIfam" id="TIGR01072">
    <property type="entry name" value="murA"/>
    <property type="match status" value="1"/>
</dbReference>
<dbReference type="NCBIfam" id="NF006873">
    <property type="entry name" value="PRK09369.1"/>
    <property type="match status" value="1"/>
</dbReference>
<dbReference type="PANTHER" id="PTHR43783">
    <property type="entry name" value="UDP-N-ACETYLGLUCOSAMINE 1-CARBOXYVINYLTRANSFERASE"/>
    <property type="match status" value="1"/>
</dbReference>
<dbReference type="PANTHER" id="PTHR43783:SF1">
    <property type="entry name" value="UDP-N-ACETYLGLUCOSAMINE 1-CARBOXYVINYLTRANSFERASE"/>
    <property type="match status" value="1"/>
</dbReference>
<dbReference type="Pfam" id="PF00275">
    <property type="entry name" value="EPSP_synthase"/>
    <property type="match status" value="1"/>
</dbReference>
<dbReference type="SUPFAM" id="SSF55205">
    <property type="entry name" value="EPT/RTPC-like"/>
    <property type="match status" value="1"/>
</dbReference>
<accession>Q8R9G7</accession>
<feature type="chain" id="PRO_0000178945" description="UDP-N-acetylglucosamine 1-carboxyvinyltransferase 2">
    <location>
        <begin position="1"/>
        <end position="417"/>
    </location>
</feature>
<feature type="active site" description="Proton donor" evidence="1">
    <location>
        <position position="116"/>
    </location>
</feature>
<feature type="binding site" evidence="1">
    <location>
        <begin position="22"/>
        <end position="23"/>
    </location>
    <ligand>
        <name>phosphoenolpyruvate</name>
        <dbReference type="ChEBI" id="CHEBI:58702"/>
    </ligand>
</feature>
<feature type="binding site" evidence="1">
    <location>
        <position position="92"/>
    </location>
    <ligand>
        <name>UDP-N-acetyl-alpha-D-glucosamine</name>
        <dbReference type="ChEBI" id="CHEBI:57705"/>
    </ligand>
</feature>
<feature type="binding site" evidence="1">
    <location>
        <begin position="121"/>
        <end position="125"/>
    </location>
    <ligand>
        <name>UDP-N-acetyl-alpha-D-glucosamine</name>
        <dbReference type="ChEBI" id="CHEBI:57705"/>
    </ligand>
</feature>
<feature type="binding site" evidence="1">
    <location>
        <position position="305"/>
    </location>
    <ligand>
        <name>UDP-N-acetyl-alpha-D-glucosamine</name>
        <dbReference type="ChEBI" id="CHEBI:57705"/>
    </ligand>
</feature>
<feature type="binding site" evidence="1">
    <location>
        <position position="327"/>
    </location>
    <ligand>
        <name>UDP-N-acetyl-alpha-D-glucosamine</name>
        <dbReference type="ChEBI" id="CHEBI:57705"/>
    </ligand>
</feature>
<feature type="modified residue" description="2-(S-cysteinyl)pyruvic acid O-phosphothioketal" evidence="1">
    <location>
        <position position="116"/>
    </location>
</feature>
<proteinExistence type="inferred from homology"/>
<protein>
    <recommendedName>
        <fullName evidence="1">UDP-N-acetylglucosamine 1-carboxyvinyltransferase 2</fullName>
        <ecNumber evidence="1">2.5.1.7</ecNumber>
    </recommendedName>
    <alternativeName>
        <fullName evidence="1">Enoylpyruvate transferase 2</fullName>
    </alternativeName>
    <alternativeName>
        <fullName evidence="1">UDP-N-acetylglucosamine enolpyruvyl transferase 2</fullName>
        <shortName evidence="1">EPT 2</shortName>
    </alternativeName>
</protein>